<protein>
    <recommendedName>
        <fullName>Actin cytoskeleton-regulatory complex protein pan1</fullName>
    </recommendedName>
</protein>
<keyword id="KW-0009">Actin-binding</keyword>
<keyword id="KW-1003">Cell membrane</keyword>
<keyword id="KW-0175">Coiled coil</keyword>
<keyword id="KW-0963">Cytoplasm</keyword>
<keyword id="KW-0206">Cytoskeleton</keyword>
<keyword id="KW-0254">Endocytosis</keyword>
<keyword id="KW-0967">Endosome</keyword>
<keyword id="KW-0472">Membrane</keyword>
<keyword id="KW-0597">Phosphoprotein</keyword>
<keyword id="KW-1185">Reference proteome</keyword>
<keyword id="KW-0677">Repeat</keyword>
<reference key="1">
    <citation type="journal article" date="2002" name="Nature">
        <title>The genome sequence of Schizosaccharomyces pombe.</title>
        <authorList>
            <person name="Wood V."/>
            <person name="Gwilliam R."/>
            <person name="Rajandream M.A."/>
            <person name="Lyne M.H."/>
            <person name="Lyne R."/>
            <person name="Stewart A."/>
            <person name="Sgouros J.G."/>
            <person name="Peat N."/>
            <person name="Hayles J."/>
            <person name="Baker S.G."/>
            <person name="Basham D."/>
            <person name="Bowman S."/>
            <person name="Brooks K."/>
            <person name="Brown D."/>
            <person name="Brown S."/>
            <person name="Chillingworth T."/>
            <person name="Churcher C.M."/>
            <person name="Collins M."/>
            <person name="Connor R."/>
            <person name="Cronin A."/>
            <person name="Davis P."/>
            <person name="Feltwell T."/>
            <person name="Fraser A."/>
            <person name="Gentles S."/>
            <person name="Goble A."/>
            <person name="Hamlin N."/>
            <person name="Harris D.E."/>
            <person name="Hidalgo J."/>
            <person name="Hodgson G."/>
            <person name="Holroyd S."/>
            <person name="Hornsby T."/>
            <person name="Howarth S."/>
            <person name="Huckle E.J."/>
            <person name="Hunt S."/>
            <person name="Jagels K."/>
            <person name="James K.D."/>
            <person name="Jones L."/>
            <person name="Jones M."/>
            <person name="Leather S."/>
            <person name="McDonald S."/>
            <person name="McLean J."/>
            <person name="Mooney P."/>
            <person name="Moule S."/>
            <person name="Mungall K.L."/>
            <person name="Murphy L.D."/>
            <person name="Niblett D."/>
            <person name="Odell C."/>
            <person name="Oliver K."/>
            <person name="O'Neil S."/>
            <person name="Pearson D."/>
            <person name="Quail M.A."/>
            <person name="Rabbinowitsch E."/>
            <person name="Rutherford K.M."/>
            <person name="Rutter S."/>
            <person name="Saunders D."/>
            <person name="Seeger K."/>
            <person name="Sharp S."/>
            <person name="Skelton J."/>
            <person name="Simmonds M.N."/>
            <person name="Squares R."/>
            <person name="Squares S."/>
            <person name="Stevens K."/>
            <person name="Taylor K."/>
            <person name="Taylor R.G."/>
            <person name="Tivey A."/>
            <person name="Walsh S.V."/>
            <person name="Warren T."/>
            <person name="Whitehead S."/>
            <person name="Woodward J.R."/>
            <person name="Volckaert G."/>
            <person name="Aert R."/>
            <person name="Robben J."/>
            <person name="Grymonprez B."/>
            <person name="Weltjens I."/>
            <person name="Vanstreels E."/>
            <person name="Rieger M."/>
            <person name="Schaefer M."/>
            <person name="Mueller-Auer S."/>
            <person name="Gabel C."/>
            <person name="Fuchs M."/>
            <person name="Duesterhoeft A."/>
            <person name="Fritzc C."/>
            <person name="Holzer E."/>
            <person name="Moestl D."/>
            <person name="Hilbert H."/>
            <person name="Borzym K."/>
            <person name="Langer I."/>
            <person name="Beck A."/>
            <person name="Lehrach H."/>
            <person name="Reinhardt R."/>
            <person name="Pohl T.M."/>
            <person name="Eger P."/>
            <person name="Zimmermann W."/>
            <person name="Wedler H."/>
            <person name="Wambutt R."/>
            <person name="Purnelle B."/>
            <person name="Goffeau A."/>
            <person name="Cadieu E."/>
            <person name="Dreano S."/>
            <person name="Gloux S."/>
            <person name="Lelaure V."/>
            <person name="Mottier S."/>
            <person name="Galibert F."/>
            <person name="Aves S.J."/>
            <person name="Xiang Z."/>
            <person name="Hunt C."/>
            <person name="Moore K."/>
            <person name="Hurst S.M."/>
            <person name="Lucas M."/>
            <person name="Rochet M."/>
            <person name="Gaillardin C."/>
            <person name="Tallada V.A."/>
            <person name="Garzon A."/>
            <person name="Thode G."/>
            <person name="Daga R.R."/>
            <person name="Cruzado L."/>
            <person name="Jimenez J."/>
            <person name="Sanchez M."/>
            <person name="del Rey F."/>
            <person name="Benito J."/>
            <person name="Dominguez A."/>
            <person name="Revuelta J.L."/>
            <person name="Moreno S."/>
            <person name="Armstrong J."/>
            <person name="Forsburg S.L."/>
            <person name="Cerutti L."/>
            <person name="Lowe T."/>
            <person name="McCombie W.R."/>
            <person name="Paulsen I."/>
            <person name="Potashkin J."/>
            <person name="Shpakovski G.V."/>
            <person name="Ussery D."/>
            <person name="Barrell B.G."/>
            <person name="Nurse P."/>
        </authorList>
    </citation>
    <scope>NUCLEOTIDE SEQUENCE [LARGE SCALE GENOMIC DNA]</scope>
    <source>
        <strain>972 / ATCC 24843</strain>
    </source>
</reference>
<reference key="2">
    <citation type="journal article" date="2000" name="Genes Cells">
        <title>Large-scale screening of intracellular protein localization in living fission yeast cells by the use of a GFP-fusion genomic DNA library.</title>
        <authorList>
            <person name="Ding D.-Q."/>
            <person name="Tomita Y."/>
            <person name="Yamamoto A."/>
            <person name="Chikashige Y."/>
            <person name="Haraguchi T."/>
            <person name="Hiraoka Y."/>
        </authorList>
    </citation>
    <scope>NUCLEOTIDE SEQUENCE [LARGE SCALE GENOMIC DNA] OF 94-281</scope>
    <source>
        <strain>ATCC 38364 / 968</strain>
    </source>
</reference>
<reference key="3">
    <citation type="journal article" date="2008" name="J. Proteome Res.">
        <title>Phosphoproteome analysis of fission yeast.</title>
        <authorList>
            <person name="Wilson-Grady J.T."/>
            <person name="Villen J."/>
            <person name="Gygi S.P."/>
        </authorList>
    </citation>
    <scope>PHOSPHORYLATION [LARGE SCALE ANALYSIS] AT THR-152; THR-706; SER-1219; SER-1221; SER-1406; SER-1409; SER-1412 AND SER-1414</scope>
    <scope>IDENTIFICATION BY MASS SPECTROMETRY</scope>
</reference>
<proteinExistence type="evidence at protein level"/>
<feature type="chain" id="PRO_0000116609" description="Actin cytoskeleton-regulatory complex protein pan1">
    <location>
        <begin position="1"/>
        <end position="1794"/>
    </location>
</feature>
<feature type="domain" description="EH 1" evidence="3">
    <location>
        <begin position="281"/>
        <end position="369"/>
    </location>
</feature>
<feature type="domain" description="EF-hand 1" evidence="5">
    <location>
        <begin position="313"/>
        <end position="348"/>
    </location>
</feature>
<feature type="domain" description="EH 2" evidence="3">
    <location>
        <begin position="821"/>
        <end position="910"/>
    </location>
</feature>
<feature type="domain" description="EF-hand 2" evidence="5">
    <location>
        <begin position="854"/>
        <end position="889"/>
    </location>
</feature>
<feature type="domain" description="WH2" evidence="4">
    <location>
        <begin position="1748"/>
        <end position="1765"/>
    </location>
</feature>
<feature type="region of interest" description="Disordered" evidence="6">
    <location>
        <begin position="651"/>
        <end position="674"/>
    </location>
</feature>
<feature type="region of interest" description="Disordered" evidence="6">
    <location>
        <begin position="717"/>
        <end position="747"/>
    </location>
</feature>
<feature type="region of interest" description="Disordered" evidence="6">
    <location>
        <begin position="925"/>
        <end position="956"/>
    </location>
</feature>
<feature type="region of interest" description="Disordered" evidence="6">
    <location>
        <begin position="1183"/>
        <end position="1227"/>
    </location>
</feature>
<feature type="region of interest" description="Disordered" evidence="6">
    <location>
        <begin position="1249"/>
        <end position="1287"/>
    </location>
</feature>
<feature type="region of interest" description="Disordered" evidence="6">
    <location>
        <begin position="1303"/>
        <end position="1794"/>
    </location>
</feature>
<feature type="coiled-coil region" evidence="2">
    <location>
        <begin position="1107"/>
        <end position="1151"/>
    </location>
</feature>
<feature type="compositionally biased region" description="Low complexity" evidence="6">
    <location>
        <begin position="651"/>
        <end position="666"/>
    </location>
</feature>
<feature type="compositionally biased region" description="Low complexity" evidence="6">
    <location>
        <begin position="717"/>
        <end position="732"/>
    </location>
</feature>
<feature type="compositionally biased region" description="Polar residues" evidence="6">
    <location>
        <begin position="1188"/>
        <end position="1225"/>
    </location>
</feature>
<feature type="compositionally biased region" description="Low complexity" evidence="6">
    <location>
        <begin position="1265"/>
        <end position="1276"/>
    </location>
</feature>
<feature type="compositionally biased region" description="Polar residues" evidence="6">
    <location>
        <begin position="1326"/>
        <end position="1350"/>
    </location>
</feature>
<feature type="compositionally biased region" description="Pro residues" evidence="6">
    <location>
        <begin position="1356"/>
        <end position="1368"/>
    </location>
</feature>
<feature type="compositionally biased region" description="Low complexity" evidence="6">
    <location>
        <begin position="1407"/>
        <end position="1418"/>
    </location>
</feature>
<feature type="compositionally biased region" description="Low complexity" evidence="6">
    <location>
        <begin position="1499"/>
        <end position="1530"/>
    </location>
</feature>
<feature type="compositionally biased region" description="Low complexity" evidence="6">
    <location>
        <begin position="1539"/>
        <end position="1553"/>
    </location>
</feature>
<feature type="compositionally biased region" description="Polar residues" evidence="6">
    <location>
        <begin position="1571"/>
        <end position="1600"/>
    </location>
</feature>
<feature type="compositionally biased region" description="Low complexity" evidence="6">
    <location>
        <begin position="1610"/>
        <end position="1622"/>
    </location>
</feature>
<feature type="compositionally biased region" description="Low complexity" evidence="6">
    <location>
        <begin position="1694"/>
        <end position="1704"/>
    </location>
</feature>
<feature type="compositionally biased region" description="Pro residues" evidence="6">
    <location>
        <begin position="1705"/>
        <end position="1736"/>
    </location>
</feature>
<feature type="compositionally biased region" description="Low complexity" evidence="6">
    <location>
        <begin position="1737"/>
        <end position="1746"/>
    </location>
</feature>
<feature type="compositionally biased region" description="Polar residues" evidence="6">
    <location>
        <begin position="1783"/>
        <end position="1794"/>
    </location>
</feature>
<feature type="modified residue" description="Phosphothreonine" evidence="7">
    <location>
        <position position="152"/>
    </location>
</feature>
<feature type="modified residue" description="Phosphothreonine" evidence="7">
    <location>
        <position position="706"/>
    </location>
</feature>
<feature type="modified residue" description="Phosphoserine" evidence="7">
    <location>
        <position position="1219"/>
    </location>
</feature>
<feature type="modified residue" description="Phosphoserine" evidence="7">
    <location>
        <position position="1221"/>
    </location>
</feature>
<feature type="modified residue" description="Phosphoserine" evidence="7">
    <location>
        <position position="1406"/>
    </location>
</feature>
<feature type="modified residue" description="Phosphoserine" evidence="7">
    <location>
        <position position="1409"/>
    </location>
</feature>
<feature type="modified residue" description="Phosphoserine" evidence="7">
    <location>
        <position position="1412"/>
    </location>
</feature>
<feature type="modified residue" description="Phosphoserine" evidence="7">
    <location>
        <position position="1414"/>
    </location>
</feature>
<feature type="sequence conflict" description="In Ref. 2; BAA87176." evidence="8" ref="2">
    <original>P</original>
    <variation>L</variation>
    <location>
        <position position="127"/>
    </location>
</feature>
<name>PAN1_SCHPO</name>
<gene>
    <name type="primary">pan1</name>
    <name type="ORF">SPAC25G10.09c</name>
    <name type="ORF">SPAC27F1.01c</name>
</gene>
<evidence type="ECO:0000250" key="1"/>
<evidence type="ECO:0000255" key="2"/>
<evidence type="ECO:0000255" key="3">
    <source>
        <dbReference type="PROSITE-ProRule" id="PRU00077"/>
    </source>
</evidence>
<evidence type="ECO:0000255" key="4">
    <source>
        <dbReference type="PROSITE-ProRule" id="PRU00406"/>
    </source>
</evidence>
<evidence type="ECO:0000255" key="5">
    <source>
        <dbReference type="PROSITE-ProRule" id="PRU00448"/>
    </source>
</evidence>
<evidence type="ECO:0000256" key="6">
    <source>
        <dbReference type="SAM" id="MobiDB-lite"/>
    </source>
</evidence>
<evidence type="ECO:0000269" key="7">
    <source>
    </source>
</evidence>
<evidence type="ECO:0000305" key="8"/>
<comment type="function">
    <text evidence="1">Component of the PAN1 actin cytoskeleton-regulatory complex required for the internalization of endosomes during actin-coupled endocytosis. The complex links the site of endocytosis to the cell membrane-associated actin cytoskeleton. Mediates uptake of external molecules and vacuolar degradation of plasma membrane proteins. Plays a role in the proper organization of the cell membrane-associated actin cytoskeleton and promotes its destabilization (By similarity).</text>
</comment>
<comment type="subunit">
    <text evidence="1">Component of the PAN1 actin cytoskeleton-regulatory complex.</text>
</comment>
<comment type="subcellular location">
    <subcellularLocation>
        <location evidence="1">Cell membrane</location>
        <topology evidence="1">Peripheral membrane protein</topology>
        <orientation evidence="1">Cytoplasmic side</orientation>
    </subcellularLocation>
    <subcellularLocation>
        <location evidence="1">Endosome membrane</location>
        <topology evidence="1">Peripheral membrane protein</topology>
        <orientation evidence="1">Cytoplasmic side</orientation>
    </subcellularLocation>
    <subcellularLocation>
        <location evidence="1">Cytoplasm</location>
        <location evidence="1">Cytoskeleton</location>
        <location evidence="1">Actin patch</location>
    </subcellularLocation>
    <text evidence="1">Cytoplasmic and cortical actin patches.</text>
</comment>
<comment type="similarity">
    <text evidence="8">Belongs to the PAN1 family.</text>
</comment>
<organism>
    <name type="scientific">Schizosaccharomyces pombe (strain 972 / ATCC 24843)</name>
    <name type="common">Fission yeast</name>
    <dbReference type="NCBI Taxonomy" id="284812"/>
    <lineage>
        <taxon>Eukaryota</taxon>
        <taxon>Fungi</taxon>
        <taxon>Dikarya</taxon>
        <taxon>Ascomycota</taxon>
        <taxon>Taphrinomycotina</taxon>
        <taxon>Schizosaccharomycetes</taxon>
        <taxon>Schizosaccharomycetales</taxon>
        <taxon>Schizosaccharomycetaceae</taxon>
        <taxon>Schizosaccharomyces</taxon>
    </lineage>
</organism>
<dbReference type="EMBL" id="CU329670">
    <property type="protein sequence ID" value="CAA94638.2"/>
    <property type="molecule type" value="Genomic_DNA"/>
</dbReference>
<dbReference type="EMBL" id="AB027872">
    <property type="protein sequence ID" value="BAA87176.1"/>
    <property type="molecule type" value="Genomic_DNA"/>
</dbReference>
<dbReference type="PIR" id="T38459">
    <property type="entry name" value="T38459"/>
</dbReference>
<dbReference type="RefSeq" id="XP_001713105.1">
    <property type="nucleotide sequence ID" value="XM_001713053.2"/>
</dbReference>
<dbReference type="SMR" id="Q10172"/>
<dbReference type="BioGRID" id="858093">
    <property type="interactions" value="9"/>
</dbReference>
<dbReference type="FunCoup" id="Q10172">
    <property type="interactions" value="33"/>
</dbReference>
<dbReference type="STRING" id="284812.Q10172"/>
<dbReference type="iPTMnet" id="Q10172"/>
<dbReference type="PaxDb" id="4896-SPAC25G10.09c.1"/>
<dbReference type="EnsemblFungi" id="SPAC25G10.09c.1">
    <property type="protein sequence ID" value="SPAC25G10.09c.1:pep"/>
    <property type="gene ID" value="SPAC25G10.09c"/>
</dbReference>
<dbReference type="PomBase" id="SPAC25G10.09c">
    <property type="gene designation" value="pan1"/>
</dbReference>
<dbReference type="VEuPathDB" id="FungiDB:SPAC25G10.09c"/>
<dbReference type="eggNOG" id="KOG0998">
    <property type="taxonomic scope" value="Eukaryota"/>
</dbReference>
<dbReference type="HOGENOM" id="CLU_240362_0_0_1"/>
<dbReference type="InParanoid" id="Q10172"/>
<dbReference type="OMA" id="GMPGQWG"/>
<dbReference type="PhylomeDB" id="Q10172"/>
<dbReference type="Reactome" id="R-SPO-416482">
    <property type="pathway name" value="G alpha (12/13) signalling events"/>
</dbReference>
<dbReference type="Reactome" id="R-SPO-8856828">
    <property type="pathway name" value="Clathrin-mediated endocytosis"/>
</dbReference>
<dbReference type="Reactome" id="R-SPO-9013148">
    <property type="pathway name" value="CDC42 GTPase cycle"/>
</dbReference>
<dbReference type="Reactome" id="R-SPO-9013406">
    <property type="pathway name" value="RHOQ GTPase cycle"/>
</dbReference>
<dbReference type="Reactome" id="R-SPO-9013420">
    <property type="pathway name" value="RHOU GTPase cycle"/>
</dbReference>
<dbReference type="PRO" id="PR:Q10172"/>
<dbReference type="Proteomes" id="UP000002485">
    <property type="component" value="Chromosome I"/>
</dbReference>
<dbReference type="GO" id="GO:0030479">
    <property type="term" value="C:actin cortical patch"/>
    <property type="evidence" value="ECO:0000314"/>
    <property type="project" value="PomBase"/>
</dbReference>
<dbReference type="GO" id="GO:0005938">
    <property type="term" value="C:cell cortex"/>
    <property type="evidence" value="ECO:0007005"/>
    <property type="project" value="PomBase"/>
</dbReference>
<dbReference type="GO" id="GO:0005737">
    <property type="term" value="C:cytoplasm"/>
    <property type="evidence" value="ECO:0000318"/>
    <property type="project" value="GO_Central"/>
</dbReference>
<dbReference type="GO" id="GO:0010008">
    <property type="term" value="C:endosome membrane"/>
    <property type="evidence" value="ECO:0007669"/>
    <property type="project" value="UniProtKB-SubCell"/>
</dbReference>
<dbReference type="GO" id="GO:0005634">
    <property type="term" value="C:nucleus"/>
    <property type="evidence" value="ECO:0007005"/>
    <property type="project" value="PomBase"/>
</dbReference>
<dbReference type="GO" id="GO:0005886">
    <property type="term" value="C:plasma membrane"/>
    <property type="evidence" value="ECO:0000318"/>
    <property type="project" value="GO_Central"/>
</dbReference>
<dbReference type="GO" id="GO:0003779">
    <property type="term" value="F:actin binding"/>
    <property type="evidence" value="ECO:0007669"/>
    <property type="project" value="UniProtKB-KW"/>
</dbReference>
<dbReference type="GO" id="GO:0005509">
    <property type="term" value="F:calcium ion binding"/>
    <property type="evidence" value="ECO:0000255"/>
    <property type="project" value="PomBase"/>
</dbReference>
<dbReference type="GO" id="GO:0000147">
    <property type="term" value="P:actin cortical patch assembly"/>
    <property type="evidence" value="ECO:0000266"/>
    <property type="project" value="PomBase"/>
</dbReference>
<dbReference type="GO" id="GO:0006897">
    <property type="term" value="P:endocytosis"/>
    <property type="evidence" value="ECO:0000318"/>
    <property type="project" value="GO_Central"/>
</dbReference>
<dbReference type="GO" id="GO:0016197">
    <property type="term" value="P:endosomal transport"/>
    <property type="evidence" value="ECO:0000318"/>
    <property type="project" value="GO_Central"/>
</dbReference>
<dbReference type="GO" id="GO:0006886">
    <property type="term" value="P:intracellular protein transport"/>
    <property type="evidence" value="ECO:0000305"/>
    <property type="project" value="PomBase"/>
</dbReference>
<dbReference type="CDD" id="cd00052">
    <property type="entry name" value="EH"/>
    <property type="match status" value="2"/>
</dbReference>
<dbReference type="FunFam" id="1.10.238.10:FF:000349">
    <property type="entry name" value="Actin cytoskeleton-regulatory complex protein PAN1"/>
    <property type="match status" value="1"/>
</dbReference>
<dbReference type="Gene3D" id="1.10.238.10">
    <property type="entry name" value="EF-hand"/>
    <property type="match status" value="2"/>
</dbReference>
<dbReference type="InterPro" id="IPR013182">
    <property type="entry name" value="DUF1720"/>
</dbReference>
<dbReference type="InterPro" id="IPR011992">
    <property type="entry name" value="EF-hand-dom_pair"/>
</dbReference>
<dbReference type="InterPro" id="IPR002048">
    <property type="entry name" value="EF_hand_dom"/>
</dbReference>
<dbReference type="InterPro" id="IPR000261">
    <property type="entry name" value="EH_dom"/>
</dbReference>
<dbReference type="InterPro" id="IPR003124">
    <property type="entry name" value="WH2_dom"/>
</dbReference>
<dbReference type="PANTHER" id="PTHR11216">
    <property type="entry name" value="EH DOMAIN"/>
    <property type="match status" value="1"/>
</dbReference>
<dbReference type="Pfam" id="PF08226">
    <property type="entry name" value="DUF1720"/>
    <property type="match status" value="8"/>
</dbReference>
<dbReference type="Pfam" id="PF12763">
    <property type="entry name" value="EH"/>
    <property type="match status" value="2"/>
</dbReference>
<dbReference type="Pfam" id="PF02205">
    <property type="entry name" value="WH2"/>
    <property type="match status" value="1"/>
</dbReference>
<dbReference type="SMART" id="SM00027">
    <property type="entry name" value="EH"/>
    <property type="match status" value="2"/>
</dbReference>
<dbReference type="SMART" id="SM00246">
    <property type="entry name" value="WH2"/>
    <property type="match status" value="1"/>
</dbReference>
<dbReference type="SUPFAM" id="SSF47473">
    <property type="entry name" value="EF-hand"/>
    <property type="match status" value="2"/>
</dbReference>
<dbReference type="PROSITE" id="PS50222">
    <property type="entry name" value="EF_HAND_2"/>
    <property type="match status" value="2"/>
</dbReference>
<dbReference type="PROSITE" id="PS50031">
    <property type="entry name" value="EH"/>
    <property type="match status" value="2"/>
</dbReference>
<dbReference type="PROSITE" id="PS51082">
    <property type="entry name" value="WH2"/>
    <property type="match status" value="1"/>
</dbReference>
<sequence>MSYPNQMNGSMYGYGANNGVQPGFDSYGMPINQGGMNYQQQTYPYQQPYQPDGYAGNTMLPFQQSQPATQFNNGFGYASQPTGSVADYGQQQQQMYGYNGMMPQTMNNTGFMQPQQTGAIPGFAPQPTGFVQPQPTGFMSQQPASFMQPQRTGGAGFIQPQRTGAMPAYQPQMNNFMQPQKTGGFAPQATGFMQTQPFGAAPSFAPQPTGFVQPQQTGVVMPPQPTGYLQAQPTGPFASFVQPQQTASFMPAAQPLKPQKTGQIHNSKAMDTRLSFVSAADQAKFEQLFKSAVGREEAMSSEIGKAILVRSKLPTVQLSKIWRLSDTTRSGRLLFPQFVLAMYLCNLGLTGKPIPDKVPDGILNEVNAMVDAISFSLDENYAKPTQPIPQAAAQQMAAQMFGGFQQAAGIPSQITGFQPQAMMPQRTGMQPQMTGFQQPMIPQRTGMQPQMTGFQQPMMPQRTGLQPQMTGFQQPMVPQRTGMQPQMTGFQQPMMPQRTGLQPQMTGFQQPMVPQRTGMQPMMPGLQQPMAPQRTGMQPMMPQRTGMQPQMTGFQQPMAPQRTGMQPMMPQRTGMQPQMPGMQQPMAPQRTGMQPMMPQRTGMQQPMAPQRTGMQPMMPQRTGMQPQMPGMQQPMAPQRTGMQPMMPQRTGMQPQMPGMQQPMAPQRTGMQPMAPQRTGMQPMMPQRTGMQPQMPGMQQPMAPQRTGMQPMMPQRTGMQPQMPGMQQPMAPQRTGMQPMAPQRTGMQPQMTGGPMLPQRTGGMAPQPTGMPGQWGFINTPLSNLPGIEALGQQMMPNAPSGGLNNTFQQKKDIPWAISKEEKRIYDQIFDAWDKERKGTLGGNAVLEIFGQSKLTRTELEHIWNLCDHGDKGSLDRDEFAVALHLIYRKLNGNEVPAVLPPELIPPSTRNFTESLNQVKNLIKNDTSNRKPFGAENQSKLKKNSFYDNPSETTEKDATLYRHNDSDASAYVSSARRRDFKEEKIESAPPIINDIDSEIASLKKRIHEKSLVVNALEDKKLAATPANDVQNDSLIYRIKSVQDEINRLSTSNKSPEVASMNVRLEELSTRVSKMLSDINEVDHTIASLSLKLFQAEDTKNSYDQTSPEATQERNRTISSKLAEMEKQKNESKAALEQMKNYVTNIENNIRAKLLPSAANDDAWLSQNVVDESVTRVVKELPVPAPAAPQTLNPPSVSTVQQSKPIESNTHTPEVKATSESPSASSNLEDRAARIKAEAQRRMNERLAALGIKPRQKGTPSPAPVNSATSTPVAAPTAQQIQPGKQASAVSSNVPAVSASISTPPAVVPTVQHPQPTKQIPTAAVKDPSTTSTSFNTAPIPQQAPLENQFSKMSLEPPVRPAVPTSPKPQIPDSSNVHAPPPPVQPMNAMPSHNAVNARPSAPERRDSFGSVSSGSNVSSIEDETSTMPLKASQPTNPGAPSNHAPQVVPPAPMHAVAPVQPKAPGMVTNAPAPSSAPAPPAPVSQLPPAVPNVPVPSMIPSVAQQPPSSVAPATAPSSTLPPSQSSFAHVPSPAPPAPQHPSAAALSSAPADNSMPHRSSPYAPQEPVQKPQAINNIAPATNLGTSQSFSPRMGPVNNSGSPLAMNAAGQPSLAVPAVPSAPSNHFNPFAKMQPPAPSPLQPSGHDSDNWSQHGDEEEEDSEDDIRSSKDAAALAAKLFGGMAPAHPVSTPPVRPQSAAPPQMSAPTPPPPPMSVPPPPSAPPMPAGPPSAPPPPLPASSAPSVPNPGDRSALLQQIHTGTRLKKTVTTDKSKPIAGRVLDASDGNSSAWYGNLS</sequence>
<accession>Q10172</accession>
<accession>Q9USC5</accession>